<gene>
    <name type="primary">bsaA</name>
    <name type="ordered locus">SAR1280</name>
</gene>
<organism>
    <name type="scientific">Staphylococcus aureus (strain MRSA252)</name>
    <dbReference type="NCBI Taxonomy" id="282458"/>
    <lineage>
        <taxon>Bacteria</taxon>
        <taxon>Bacillati</taxon>
        <taxon>Bacillota</taxon>
        <taxon>Bacilli</taxon>
        <taxon>Bacillales</taxon>
        <taxon>Staphylococcaceae</taxon>
        <taxon>Staphylococcus</taxon>
    </lineage>
</organism>
<evidence type="ECO:0000250" key="1"/>
<evidence type="ECO:0000305" key="2"/>
<reference key="1">
    <citation type="journal article" date="2004" name="Proc. Natl. Acad. Sci. U.S.A.">
        <title>Complete genomes of two clinical Staphylococcus aureus strains: evidence for the rapid evolution of virulence and drug resistance.</title>
        <authorList>
            <person name="Holden M.T.G."/>
            <person name="Feil E.J."/>
            <person name="Lindsay J.A."/>
            <person name="Peacock S.J."/>
            <person name="Day N.P.J."/>
            <person name="Enright M.C."/>
            <person name="Foster T.J."/>
            <person name="Moore C.E."/>
            <person name="Hurst L."/>
            <person name="Atkin R."/>
            <person name="Barron A."/>
            <person name="Bason N."/>
            <person name="Bentley S.D."/>
            <person name="Chillingworth C."/>
            <person name="Chillingworth T."/>
            <person name="Churcher C."/>
            <person name="Clark L."/>
            <person name="Corton C."/>
            <person name="Cronin A."/>
            <person name="Doggett J."/>
            <person name="Dowd L."/>
            <person name="Feltwell T."/>
            <person name="Hance Z."/>
            <person name="Harris B."/>
            <person name="Hauser H."/>
            <person name="Holroyd S."/>
            <person name="Jagels K."/>
            <person name="James K.D."/>
            <person name="Lennard N."/>
            <person name="Line A."/>
            <person name="Mayes R."/>
            <person name="Moule S."/>
            <person name="Mungall K."/>
            <person name="Ormond D."/>
            <person name="Quail M.A."/>
            <person name="Rabbinowitsch E."/>
            <person name="Rutherford K.M."/>
            <person name="Sanders M."/>
            <person name="Sharp S."/>
            <person name="Simmonds M."/>
            <person name="Stevens K."/>
            <person name="Whitehead S."/>
            <person name="Barrell B.G."/>
            <person name="Spratt B.G."/>
            <person name="Parkhill J."/>
        </authorList>
    </citation>
    <scope>NUCLEOTIDE SEQUENCE [LARGE SCALE GENOMIC DNA]</scope>
    <source>
        <strain>MRSA252</strain>
    </source>
</reference>
<name>BSAA_STAAR</name>
<accession>Q6GHD0</accession>
<feature type="chain" id="PRO_0000066653" description="Glutathione peroxidase homolog BsaA">
    <location>
        <begin position="1"/>
        <end position="158"/>
    </location>
</feature>
<feature type="active site" evidence="1">
    <location>
        <position position="36"/>
    </location>
</feature>
<protein>
    <recommendedName>
        <fullName>Glutathione peroxidase homolog BsaA</fullName>
    </recommendedName>
</protein>
<comment type="similarity">
    <text evidence="2">Belongs to the glutathione peroxidase family.</text>
</comment>
<sequence>METIYDFVVETNKGVTYKLDAYKGDVMLIVNTASECGFTSQFEGLQSLYEKYKDQGFVILGFPCNQFGGQEPGSGEEAAQNCKLNYGVTFPMHQKIDVKGEHQLPLFRYLTAAQHGFFNEKIKWNFTKFLVDREGNVVKRFAPQKKPVQIEREIEKLL</sequence>
<dbReference type="EMBL" id="BX571856">
    <property type="protein sequence ID" value="CAG40283.1"/>
    <property type="molecule type" value="Genomic_DNA"/>
</dbReference>
<dbReference type="RefSeq" id="WP_000448078.1">
    <property type="nucleotide sequence ID" value="NC_002952.2"/>
</dbReference>
<dbReference type="SMR" id="Q6GHD0"/>
<dbReference type="KEGG" id="sar:SAR1280"/>
<dbReference type="HOGENOM" id="CLU_029507_2_2_9"/>
<dbReference type="Proteomes" id="UP000000596">
    <property type="component" value="Chromosome"/>
</dbReference>
<dbReference type="GO" id="GO:0004601">
    <property type="term" value="F:peroxidase activity"/>
    <property type="evidence" value="ECO:0007669"/>
    <property type="project" value="UniProtKB-KW"/>
</dbReference>
<dbReference type="GO" id="GO:0034599">
    <property type="term" value="P:cellular response to oxidative stress"/>
    <property type="evidence" value="ECO:0007669"/>
    <property type="project" value="TreeGrafter"/>
</dbReference>
<dbReference type="CDD" id="cd00340">
    <property type="entry name" value="GSH_Peroxidase"/>
    <property type="match status" value="1"/>
</dbReference>
<dbReference type="FunFam" id="3.40.30.10:FF:000010">
    <property type="entry name" value="Glutathione peroxidase"/>
    <property type="match status" value="1"/>
</dbReference>
<dbReference type="Gene3D" id="3.40.30.10">
    <property type="entry name" value="Glutaredoxin"/>
    <property type="match status" value="1"/>
</dbReference>
<dbReference type="InterPro" id="IPR000889">
    <property type="entry name" value="Glutathione_peroxidase"/>
</dbReference>
<dbReference type="InterPro" id="IPR029760">
    <property type="entry name" value="GPX_CS"/>
</dbReference>
<dbReference type="InterPro" id="IPR036249">
    <property type="entry name" value="Thioredoxin-like_sf"/>
</dbReference>
<dbReference type="PANTHER" id="PTHR11592">
    <property type="entry name" value="GLUTATHIONE PEROXIDASE"/>
    <property type="match status" value="1"/>
</dbReference>
<dbReference type="PANTHER" id="PTHR11592:SF78">
    <property type="entry name" value="GLUTATHIONE PEROXIDASE"/>
    <property type="match status" value="1"/>
</dbReference>
<dbReference type="Pfam" id="PF00255">
    <property type="entry name" value="GSHPx"/>
    <property type="match status" value="1"/>
</dbReference>
<dbReference type="PIRSF" id="PIRSF000303">
    <property type="entry name" value="Glutathion_perox"/>
    <property type="match status" value="1"/>
</dbReference>
<dbReference type="PRINTS" id="PR01011">
    <property type="entry name" value="GLUTPROXDASE"/>
</dbReference>
<dbReference type="SUPFAM" id="SSF52833">
    <property type="entry name" value="Thioredoxin-like"/>
    <property type="match status" value="1"/>
</dbReference>
<dbReference type="PROSITE" id="PS00763">
    <property type="entry name" value="GLUTATHIONE_PEROXID_2"/>
    <property type="match status" value="1"/>
</dbReference>
<dbReference type="PROSITE" id="PS51355">
    <property type="entry name" value="GLUTATHIONE_PEROXID_3"/>
    <property type="match status" value="1"/>
</dbReference>
<proteinExistence type="inferred from homology"/>
<keyword id="KW-0560">Oxidoreductase</keyword>
<keyword id="KW-0575">Peroxidase</keyword>